<protein>
    <recommendedName>
        <fullName>Uncharacterized protein L51</fullName>
    </recommendedName>
</protein>
<evidence type="ECO:0000305" key="1"/>
<reference key="1">
    <citation type="journal article" date="2004" name="Science">
        <title>The 1.2-megabase genome sequence of Mimivirus.</title>
        <authorList>
            <person name="Raoult D."/>
            <person name="Audic S."/>
            <person name="Robert C."/>
            <person name="Abergel C."/>
            <person name="Renesto P."/>
            <person name="Ogata H."/>
            <person name="La Scola B."/>
            <person name="Susan M."/>
            <person name="Claverie J.-M."/>
        </authorList>
    </citation>
    <scope>NUCLEOTIDE SEQUENCE [LARGE SCALE GENOMIC DNA]</scope>
    <source>
        <strain>Rowbotham-Bradford</strain>
    </source>
</reference>
<accession>Q5UPD1</accession>
<gene>
    <name type="ordered locus">MIMI_L51</name>
</gene>
<dbReference type="EMBL" id="AY653733">
    <property type="protein sequence ID" value="AAV50326.1"/>
    <property type="molecule type" value="Genomic_DNA"/>
</dbReference>
<dbReference type="KEGG" id="vg:9924639"/>
<dbReference type="OrthoDB" id="28100at10239"/>
<dbReference type="Proteomes" id="UP000001134">
    <property type="component" value="Genome"/>
</dbReference>
<sequence length="159" mass="18547">MSNQTDSVNKSFKTVDEITNKTVDETTNKSVDEATSKLIGKIIKRSSKIDKELEKLQLSIKGNKLVISHQDNIIGNVYQYKGKYHCMCFISQEWVEEINDWYRCCDNECDDHDDIPRTIPYPNNGMDYEVPAIKFIIDNECHLNEAVFKVWKCWKTTNK</sequence>
<keyword id="KW-1185">Reference proteome</keyword>
<proteinExistence type="inferred from homology"/>
<name>YL051_MIMIV</name>
<comment type="similarity">
    <text evidence="1">Belongs to the mimivirus L15/L51/R83 family.</text>
</comment>
<organism>
    <name type="scientific">Acanthamoeba polyphaga mimivirus</name>
    <name type="common">APMV</name>
    <dbReference type="NCBI Taxonomy" id="212035"/>
    <lineage>
        <taxon>Viruses</taxon>
        <taxon>Varidnaviria</taxon>
        <taxon>Bamfordvirae</taxon>
        <taxon>Nucleocytoviricota</taxon>
        <taxon>Megaviricetes</taxon>
        <taxon>Imitervirales</taxon>
        <taxon>Mimiviridae</taxon>
        <taxon>Megamimivirinae</taxon>
        <taxon>Mimivirus</taxon>
        <taxon>Mimivirus bradfordmassiliense</taxon>
    </lineage>
</organism>
<feature type="chain" id="PRO_0000071192" description="Uncharacterized protein L51">
    <location>
        <begin position="1"/>
        <end position="159"/>
    </location>
</feature>
<organismHost>
    <name type="scientific">Acanthamoeba polyphaga</name>
    <name type="common">Amoeba</name>
    <dbReference type="NCBI Taxonomy" id="5757"/>
</organismHost>